<feature type="chain" id="PRO_0000133688" description="Probable WRKY transcription factor 47">
    <location>
        <begin position="1"/>
        <end position="489"/>
    </location>
</feature>
<feature type="DNA-binding region" description="WRKY" evidence="2">
    <location>
        <begin position="233"/>
        <end position="299"/>
    </location>
</feature>
<feature type="region of interest" description="Disordered" evidence="3">
    <location>
        <begin position="15"/>
        <end position="43"/>
    </location>
</feature>
<feature type="region of interest" description="Disordered" evidence="3">
    <location>
        <begin position="143"/>
        <end position="222"/>
    </location>
</feature>
<feature type="region of interest" description="Disordered" evidence="3">
    <location>
        <begin position="449"/>
        <end position="489"/>
    </location>
</feature>
<feature type="compositionally biased region" description="Basic and acidic residues" evidence="3">
    <location>
        <begin position="144"/>
        <end position="153"/>
    </location>
</feature>
<feature type="compositionally biased region" description="Basic and acidic residues" evidence="3">
    <location>
        <begin position="163"/>
        <end position="172"/>
    </location>
</feature>
<feature type="compositionally biased region" description="Basic and acidic residues" evidence="3">
    <location>
        <begin position="182"/>
        <end position="215"/>
    </location>
</feature>
<feature type="compositionally biased region" description="Polar residues" evidence="3">
    <location>
        <begin position="469"/>
        <end position="489"/>
    </location>
</feature>
<proteinExistence type="evidence at protein level"/>
<evidence type="ECO:0000250" key="1"/>
<evidence type="ECO:0000255" key="2">
    <source>
        <dbReference type="PROSITE-ProRule" id="PRU00223"/>
    </source>
</evidence>
<evidence type="ECO:0000256" key="3">
    <source>
        <dbReference type="SAM" id="MobiDB-lite"/>
    </source>
</evidence>
<evidence type="ECO:0000305" key="4"/>
<comment type="function">
    <text evidence="1">Transcription factor. Interacts specifically with the W box (5'-(T)TGAC[CT]-3'), a frequently occurring elicitor-responsive cis-acting element (By similarity).</text>
</comment>
<comment type="interaction">
    <interactant intactId="EBI-2367993">
        <id>Q9ZSI7</id>
    </interactant>
    <interactant intactId="EBI-621986">
        <id>Q9SZJ6</id>
        <label>AGL21</label>
    </interactant>
    <organismsDiffer>false</organismsDiffer>
    <experiments>3</experiments>
</comment>
<comment type="interaction">
    <interactant intactId="EBI-2367993">
        <id>Q9ZSI7</id>
    </interactant>
    <interactant intactId="EBI-15191587">
        <id>F4K1A8</id>
        <label>At5g26749</label>
    </interactant>
    <organismsDiffer>false</organismsDiffer>
    <experiments>3</experiments>
</comment>
<comment type="interaction">
    <interactant intactId="EBI-2367993">
        <id>Q9ZSI7</id>
    </interactant>
    <interactant intactId="EBI-15193025">
        <id>Q9LXU1</id>
        <label>NOT9B</label>
    </interactant>
    <organismsDiffer>false</organismsDiffer>
    <experiments>4</experiments>
</comment>
<comment type="interaction">
    <interactant intactId="EBI-2367993">
        <id>Q9ZSI7</id>
    </interactant>
    <interactant intactId="EBI-4459694">
        <id>Q6X7J9</id>
        <label>WOX4</label>
    </interactant>
    <organismsDiffer>false</organismsDiffer>
    <experiments>3</experiments>
</comment>
<comment type="interaction">
    <interactant intactId="EBI-2367993">
        <id>Q9ZSI7</id>
    </interactant>
    <interactant intactId="EBI-15196907">
        <id>Q9XEC3</id>
        <label>WRKY42</label>
    </interactant>
    <organismsDiffer>false</organismsDiffer>
    <experiments>3</experiments>
</comment>
<comment type="subcellular location">
    <subcellularLocation>
        <location evidence="2">Nucleus</location>
    </subcellularLocation>
</comment>
<comment type="sequence caution" evidence="4">
    <conflict type="erroneous gene model prediction">
        <sequence resource="EMBL-CDS" id="AAC72869"/>
    </conflict>
</comment>
<protein>
    <recommendedName>
        <fullName>Probable WRKY transcription factor 47</fullName>
    </recommendedName>
    <alternativeName>
        <fullName>WRKY DNA-binding protein 47</fullName>
    </alternativeName>
</protein>
<reference key="1">
    <citation type="submission" date="2002-01" db="EMBL/GenBank/DDBJ databases">
        <title>Arabidopsis thaliana transcription factor WRKY47.</title>
        <authorList>
            <person name="Ulker B."/>
            <person name="Kushnir S."/>
            <person name="Somssich I.E."/>
        </authorList>
    </citation>
    <scope>NUCLEOTIDE SEQUENCE [MRNA]</scope>
    <source>
        <strain>cv. Columbia</strain>
        <tissue>Flower</tissue>
    </source>
</reference>
<reference key="2">
    <citation type="journal article" date="1999" name="Nature">
        <title>Sequence and analysis of chromosome 4 of the plant Arabidopsis thaliana.</title>
        <authorList>
            <person name="Mayer K.F.X."/>
            <person name="Schueller C."/>
            <person name="Wambutt R."/>
            <person name="Murphy G."/>
            <person name="Volckaert G."/>
            <person name="Pohl T."/>
            <person name="Duesterhoeft A."/>
            <person name="Stiekema W."/>
            <person name="Entian K.-D."/>
            <person name="Terryn N."/>
            <person name="Harris B."/>
            <person name="Ansorge W."/>
            <person name="Brandt P."/>
            <person name="Grivell L.A."/>
            <person name="Rieger M."/>
            <person name="Weichselgartner M."/>
            <person name="de Simone V."/>
            <person name="Obermaier B."/>
            <person name="Mache R."/>
            <person name="Mueller M."/>
            <person name="Kreis M."/>
            <person name="Delseny M."/>
            <person name="Puigdomenech P."/>
            <person name="Watson M."/>
            <person name="Schmidtheini T."/>
            <person name="Reichert B."/>
            <person name="Portetelle D."/>
            <person name="Perez-Alonso M."/>
            <person name="Boutry M."/>
            <person name="Bancroft I."/>
            <person name="Vos P."/>
            <person name="Hoheisel J."/>
            <person name="Zimmermann W."/>
            <person name="Wedler H."/>
            <person name="Ridley P."/>
            <person name="Langham S.-A."/>
            <person name="McCullagh B."/>
            <person name="Bilham L."/>
            <person name="Robben J."/>
            <person name="van der Schueren J."/>
            <person name="Grymonprez B."/>
            <person name="Chuang Y.-J."/>
            <person name="Vandenbussche F."/>
            <person name="Braeken M."/>
            <person name="Weltjens I."/>
            <person name="Voet M."/>
            <person name="Bastiaens I."/>
            <person name="Aert R."/>
            <person name="Defoor E."/>
            <person name="Weitzenegger T."/>
            <person name="Bothe G."/>
            <person name="Ramsperger U."/>
            <person name="Hilbert H."/>
            <person name="Braun M."/>
            <person name="Holzer E."/>
            <person name="Brandt A."/>
            <person name="Peters S."/>
            <person name="van Staveren M."/>
            <person name="Dirkse W."/>
            <person name="Mooijman P."/>
            <person name="Klein Lankhorst R."/>
            <person name="Rose M."/>
            <person name="Hauf J."/>
            <person name="Koetter P."/>
            <person name="Berneiser S."/>
            <person name="Hempel S."/>
            <person name="Feldpausch M."/>
            <person name="Lamberth S."/>
            <person name="Van den Daele H."/>
            <person name="De Keyser A."/>
            <person name="Buysshaert C."/>
            <person name="Gielen J."/>
            <person name="Villarroel R."/>
            <person name="De Clercq R."/>
            <person name="van Montagu M."/>
            <person name="Rogers J."/>
            <person name="Cronin A."/>
            <person name="Quail M.A."/>
            <person name="Bray-Allen S."/>
            <person name="Clark L."/>
            <person name="Doggett J."/>
            <person name="Hall S."/>
            <person name="Kay M."/>
            <person name="Lennard N."/>
            <person name="McLay K."/>
            <person name="Mayes R."/>
            <person name="Pettett A."/>
            <person name="Rajandream M.A."/>
            <person name="Lyne M."/>
            <person name="Benes V."/>
            <person name="Rechmann S."/>
            <person name="Borkova D."/>
            <person name="Bloecker H."/>
            <person name="Scharfe M."/>
            <person name="Grimm M."/>
            <person name="Loehnert T.-H."/>
            <person name="Dose S."/>
            <person name="de Haan M."/>
            <person name="Maarse A.C."/>
            <person name="Schaefer M."/>
            <person name="Mueller-Auer S."/>
            <person name="Gabel C."/>
            <person name="Fuchs M."/>
            <person name="Fartmann B."/>
            <person name="Granderath K."/>
            <person name="Dauner D."/>
            <person name="Herzl A."/>
            <person name="Neumann S."/>
            <person name="Argiriou A."/>
            <person name="Vitale D."/>
            <person name="Liguori R."/>
            <person name="Piravandi E."/>
            <person name="Massenet O."/>
            <person name="Quigley F."/>
            <person name="Clabauld G."/>
            <person name="Muendlein A."/>
            <person name="Felber R."/>
            <person name="Schnabl S."/>
            <person name="Hiller R."/>
            <person name="Schmidt W."/>
            <person name="Lecharny A."/>
            <person name="Aubourg S."/>
            <person name="Chefdor F."/>
            <person name="Cooke R."/>
            <person name="Berger C."/>
            <person name="Monfort A."/>
            <person name="Casacuberta E."/>
            <person name="Gibbons T."/>
            <person name="Weber N."/>
            <person name="Vandenbol M."/>
            <person name="Bargues M."/>
            <person name="Terol J."/>
            <person name="Torres A."/>
            <person name="Perez-Perez A."/>
            <person name="Purnelle B."/>
            <person name="Bent E."/>
            <person name="Johnson S."/>
            <person name="Tacon D."/>
            <person name="Jesse T."/>
            <person name="Heijnen L."/>
            <person name="Schwarz S."/>
            <person name="Scholler P."/>
            <person name="Heber S."/>
            <person name="Francs P."/>
            <person name="Bielke C."/>
            <person name="Frishman D."/>
            <person name="Haase D."/>
            <person name="Lemcke K."/>
            <person name="Mewes H.-W."/>
            <person name="Stocker S."/>
            <person name="Zaccaria P."/>
            <person name="Bevan M."/>
            <person name="Wilson R.K."/>
            <person name="de la Bastide M."/>
            <person name="Habermann K."/>
            <person name="Parnell L."/>
            <person name="Dedhia N."/>
            <person name="Gnoj L."/>
            <person name="Schutz K."/>
            <person name="Huang E."/>
            <person name="Spiegel L."/>
            <person name="Sekhon M."/>
            <person name="Murray J."/>
            <person name="Sheet P."/>
            <person name="Cordes M."/>
            <person name="Abu-Threideh J."/>
            <person name="Stoneking T."/>
            <person name="Kalicki J."/>
            <person name="Graves T."/>
            <person name="Harmon G."/>
            <person name="Edwards J."/>
            <person name="Latreille P."/>
            <person name="Courtney L."/>
            <person name="Cloud J."/>
            <person name="Abbott A."/>
            <person name="Scott K."/>
            <person name="Johnson D."/>
            <person name="Minx P."/>
            <person name="Bentley D."/>
            <person name="Fulton B."/>
            <person name="Miller N."/>
            <person name="Greco T."/>
            <person name="Kemp K."/>
            <person name="Kramer J."/>
            <person name="Fulton L."/>
            <person name="Mardis E."/>
            <person name="Dante M."/>
            <person name="Pepin K."/>
            <person name="Hillier L.W."/>
            <person name="Nelson J."/>
            <person name="Spieth J."/>
            <person name="Ryan E."/>
            <person name="Andrews S."/>
            <person name="Geisel C."/>
            <person name="Layman D."/>
            <person name="Du H."/>
            <person name="Ali J."/>
            <person name="Berghoff A."/>
            <person name="Jones K."/>
            <person name="Drone K."/>
            <person name="Cotton M."/>
            <person name="Joshu C."/>
            <person name="Antonoiu B."/>
            <person name="Zidanic M."/>
            <person name="Strong C."/>
            <person name="Sun H."/>
            <person name="Lamar B."/>
            <person name="Yordan C."/>
            <person name="Ma P."/>
            <person name="Zhong J."/>
            <person name="Preston R."/>
            <person name="Vil D."/>
            <person name="Shekher M."/>
            <person name="Matero A."/>
            <person name="Shah R."/>
            <person name="Swaby I.K."/>
            <person name="O'Shaughnessy A."/>
            <person name="Rodriguez M."/>
            <person name="Hoffman J."/>
            <person name="Till S."/>
            <person name="Granat S."/>
            <person name="Shohdy N."/>
            <person name="Hasegawa A."/>
            <person name="Hameed A."/>
            <person name="Lodhi M."/>
            <person name="Johnson A."/>
            <person name="Chen E."/>
            <person name="Marra M.A."/>
            <person name="Martienssen R."/>
            <person name="McCombie W.R."/>
        </authorList>
    </citation>
    <scope>NUCLEOTIDE SEQUENCE [LARGE SCALE GENOMIC DNA]</scope>
    <source>
        <strain>cv. Columbia</strain>
    </source>
</reference>
<reference key="3">
    <citation type="journal article" date="2017" name="Plant J.">
        <title>Araport11: a complete reannotation of the Arabidopsis thaliana reference genome.</title>
        <authorList>
            <person name="Cheng C.Y."/>
            <person name="Krishnakumar V."/>
            <person name="Chan A.P."/>
            <person name="Thibaud-Nissen F."/>
            <person name="Schobel S."/>
            <person name="Town C.D."/>
        </authorList>
    </citation>
    <scope>GENOME REANNOTATION</scope>
    <source>
        <strain>cv. Columbia</strain>
    </source>
</reference>
<reference key="4">
    <citation type="journal article" date="2003" name="Science">
        <title>Empirical analysis of transcriptional activity in the Arabidopsis genome.</title>
        <authorList>
            <person name="Yamada K."/>
            <person name="Lim J."/>
            <person name="Dale J.M."/>
            <person name="Chen H."/>
            <person name="Shinn P."/>
            <person name="Palm C.J."/>
            <person name="Southwick A.M."/>
            <person name="Wu H.C."/>
            <person name="Kim C.J."/>
            <person name="Nguyen M."/>
            <person name="Pham P.K."/>
            <person name="Cheuk R.F."/>
            <person name="Karlin-Newmann G."/>
            <person name="Liu S.X."/>
            <person name="Lam B."/>
            <person name="Sakano H."/>
            <person name="Wu T."/>
            <person name="Yu G."/>
            <person name="Miranda M."/>
            <person name="Quach H.L."/>
            <person name="Tripp M."/>
            <person name="Chang C.H."/>
            <person name="Lee J.M."/>
            <person name="Toriumi M.J."/>
            <person name="Chan M.M."/>
            <person name="Tang C.C."/>
            <person name="Onodera C.S."/>
            <person name="Deng J.M."/>
            <person name="Akiyama K."/>
            <person name="Ansari Y."/>
            <person name="Arakawa T."/>
            <person name="Banh J."/>
            <person name="Banno F."/>
            <person name="Bowser L."/>
            <person name="Brooks S.Y."/>
            <person name="Carninci P."/>
            <person name="Chao Q."/>
            <person name="Choy N."/>
            <person name="Enju A."/>
            <person name="Goldsmith A.D."/>
            <person name="Gurjal M."/>
            <person name="Hansen N.F."/>
            <person name="Hayashizaki Y."/>
            <person name="Johnson-Hopson C."/>
            <person name="Hsuan V.W."/>
            <person name="Iida K."/>
            <person name="Karnes M."/>
            <person name="Khan S."/>
            <person name="Koesema E."/>
            <person name="Ishida J."/>
            <person name="Jiang P.X."/>
            <person name="Jones T."/>
            <person name="Kawai J."/>
            <person name="Kamiya A."/>
            <person name="Meyers C."/>
            <person name="Nakajima M."/>
            <person name="Narusaka M."/>
            <person name="Seki M."/>
            <person name="Sakurai T."/>
            <person name="Satou M."/>
            <person name="Tamse R."/>
            <person name="Vaysberg M."/>
            <person name="Wallender E.K."/>
            <person name="Wong C."/>
            <person name="Yamamura Y."/>
            <person name="Yuan S."/>
            <person name="Shinozaki K."/>
            <person name="Davis R.W."/>
            <person name="Theologis A."/>
            <person name="Ecker J.R."/>
        </authorList>
    </citation>
    <scope>NUCLEOTIDE SEQUENCE [LARGE SCALE MRNA]</scope>
    <source>
        <strain>cv. Columbia</strain>
    </source>
</reference>
<gene>
    <name type="primary">WRKY47</name>
    <name type="ordered locus">At4g01720</name>
    <name type="ORF">T15B16.12</name>
</gene>
<accession>Q9ZSI7</accession>
<accession>Q9M116</accession>
<keyword id="KW-0238">DNA-binding</keyword>
<keyword id="KW-0539">Nucleus</keyword>
<keyword id="KW-1185">Reference proteome</keyword>
<keyword id="KW-0804">Transcription</keyword>
<keyword id="KW-0805">Transcription regulation</keyword>
<sequence>MEEHIQDRREIAFLHSGEFLHGDSDSKDHQPNESPVERHHESSIKEVDFFAAKSQPFDLGHVRTTTIVGSSGFNDGLGLVNSCHGTSSNDGDDKTKTQISRLKLELERLHEENHKLKHLLDEVSESYNDLQRRVLLARQTQVEGLHHKQHEDVPQAGSSQALENRRPKDMNHETPATTLKRRSPDDVDGRDMHRGSPKTPRIDQNKSTNHEEQQNPHDQLPYRKARVSVRARSDATTVNDGCQWRKYGQKMAKGNPCPRAYYRCTMAVGCPVRKQVQRCAEDTTILTTTYEGNHNHPLPPSATAMAATTSAAAAMLLSGSSSSNLHQTLSSPSATSSSSFYHNFPYTSTIATLSASAPFPTITLDLTNPPRPLQPPPQFLSQYGPAAFLPNANQIRSMNNNNQQLLIPNLFGPQAPPREMVDSVRAAIAMDPNFTAALAAAISNIIGGGNNDNNNNTDINDNKVDAKSGGSSNGDSPQLPQSCTTFSTN</sequence>
<dbReference type="EMBL" id="AF480165">
    <property type="protein sequence ID" value="AAL85881.1"/>
    <property type="molecule type" value="mRNA"/>
</dbReference>
<dbReference type="EMBL" id="AF104919">
    <property type="protein sequence ID" value="AAC72869.1"/>
    <property type="status" value="ALT_SEQ"/>
    <property type="molecule type" value="Genomic_DNA"/>
</dbReference>
<dbReference type="EMBL" id="AL161492">
    <property type="protein sequence ID" value="CAB77742.1"/>
    <property type="molecule type" value="Genomic_DNA"/>
</dbReference>
<dbReference type="EMBL" id="CP002687">
    <property type="protein sequence ID" value="AEE82069.1"/>
    <property type="molecule type" value="Genomic_DNA"/>
</dbReference>
<dbReference type="EMBL" id="BT008704">
    <property type="protein sequence ID" value="AAP40510.1"/>
    <property type="molecule type" value="mRNA"/>
</dbReference>
<dbReference type="PIR" id="B85022">
    <property type="entry name" value="B85022"/>
</dbReference>
<dbReference type="RefSeq" id="NP_192081.1">
    <property type="nucleotide sequence ID" value="NM_116402.4"/>
</dbReference>
<dbReference type="SMR" id="Q9ZSI7"/>
<dbReference type="BioGRID" id="13292">
    <property type="interactions" value="19"/>
</dbReference>
<dbReference type="FunCoup" id="Q9ZSI7">
    <property type="interactions" value="57"/>
</dbReference>
<dbReference type="IntAct" id="Q9ZSI7">
    <property type="interactions" value="19"/>
</dbReference>
<dbReference type="STRING" id="3702.Q9ZSI7"/>
<dbReference type="iPTMnet" id="Q9ZSI7"/>
<dbReference type="PaxDb" id="3702-AT4G01720.1"/>
<dbReference type="ProteomicsDB" id="246418"/>
<dbReference type="EnsemblPlants" id="AT4G01720.1">
    <property type="protein sequence ID" value="AT4G01720.1"/>
    <property type="gene ID" value="AT4G01720"/>
</dbReference>
<dbReference type="GeneID" id="828001"/>
<dbReference type="Gramene" id="AT4G01720.1">
    <property type="protein sequence ID" value="AT4G01720.1"/>
    <property type="gene ID" value="AT4G01720"/>
</dbReference>
<dbReference type="KEGG" id="ath:AT4G01720"/>
<dbReference type="Araport" id="AT4G01720"/>
<dbReference type="TAIR" id="AT4G01720">
    <property type="gene designation" value="WRKY47"/>
</dbReference>
<dbReference type="eggNOG" id="ENOG502QSY8">
    <property type="taxonomic scope" value="Eukaryota"/>
</dbReference>
<dbReference type="HOGENOM" id="CLU_021824_3_2_1"/>
<dbReference type="InParanoid" id="Q9ZSI7"/>
<dbReference type="OMA" id="YHNFPYT"/>
<dbReference type="OrthoDB" id="2020995at2759"/>
<dbReference type="PhylomeDB" id="Q9ZSI7"/>
<dbReference type="PRO" id="PR:Q9ZSI7"/>
<dbReference type="Proteomes" id="UP000006548">
    <property type="component" value="Chromosome 4"/>
</dbReference>
<dbReference type="ExpressionAtlas" id="Q9ZSI7">
    <property type="expression patterns" value="baseline and differential"/>
</dbReference>
<dbReference type="GO" id="GO:0005634">
    <property type="term" value="C:nucleus"/>
    <property type="evidence" value="ECO:0007669"/>
    <property type="project" value="UniProtKB-SubCell"/>
</dbReference>
<dbReference type="GO" id="GO:0003700">
    <property type="term" value="F:DNA-binding transcription factor activity"/>
    <property type="evidence" value="ECO:0000250"/>
    <property type="project" value="TAIR"/>
</dbReference>
<dbReference type="GO" id="GO:0043565">
    <property type="term" value="F:sequence-specific DNA binding"/>
    <property type="evidence" value="ECO:0007669"/>
    <property type="project" value="InterPro"/>
</dbReference>
<dbReference type="FunFam" id="2.20.25.80:FF:000002">
    <property type="entry name" value="probable WRKY transcription factor 31"/>
    <property type="match status" value="1"/>
</dbReference>
<dbReference type="Gene3D" id="2.20.25.80">
    <property type="entry name" value="WRKY domain"/>
    <property type="match status" value="1"/>
</dbReference>
<dbReference type="InterPro" id="IPR003657">
    <property type="entry name" value="WRKY_dom"/>
</dbReference>
<dbReference type="InterPro" id="IPR036576">
    <property type="entry name" value="WRKY_dom_sf"/>
</dbReference>
<dbReference type="InterPro" id="IPR044810">
    <property type="entry name" value="WRKY_plant"/>
</dbReference>
<dbReference type="PANTHER" id="PTHR31429">
    <property type="entry name" value="WRKY TRANSCRIPTION FACTOR 36-RELATED"/>
    <property type="match status" value="1"/>
</dbReference>
<dbReference type="PANTHER" id="PTHR31429:SF59">
    <property type="entry name" value="WRKY TRANSCRIPTION FACTOR 47-RELATED"/>
    <property type="match status" value="1"/>
</dbReference>
<dbReference type="Pfam" id="PF03106">
    <property type="entry name" value="WRKY"/>
    <property type="match status" value="1"/>
</dbReference>
<dbReference type="SMART" id="SM00774">
    <property type="entry name" value="WRKY"/>
    <property type="match status" value="1"/>
</dbReference>
<dbReference type="SUPFAM" id="SSF118290">
    <property type="entry name" value="WRKY DNA-binding domain"/>
    <property type="match status" value="1"/>
</dbReference>
<dbReference type="PROSITE" id="PS50811">
    <property type="entry name" value="WRKY"/>
    <property type="match status" value="1"/>
</dbReference>
<organism>
    <name type="scientific">Arabidopsis thaliana</name>
    <name type="common">Mouse-ear cress</name>
    <dbReference type="NCBI Taxonomy" id="3702"/>
    <lineage>
        <taxon>Eukaryota</taxon>
        <taxon>Viridiplantae</taxon>
        <taxon>Streptophyta</taxon>
        <taxon>Embryophyta</taxon>
        <taxon>Tracheophyta</taxon>
        <taxon>Spermatophyta</taxon>
        <taxon>Magnoliopsida</taxon>
        <taxon>eudicotyledons</taxon>
        <taxon>Gunneridae</taxon>
        <taxon>Pentapetalae</taxon>
        <taxon>rosids</taxon>
        <taxon>malvids</taxon>
        <taxon>Brassicales</taxon>
        <taxon>Brassicaceae</taxon>
        <taxon>Camelineae</taxon>
        <taxon>Arabidopsis</taxon>
    </lineage>
</organism>
<name>WRK47_ARATH</name>